<evidence type="ECO:0000255" key="1">
    <source>
        <dbReference type="HAMAP-Rule" id="MF_01869"/>
    </source>
</evidence>
<accession>B4ETM0</accession>
<comment type="function">
    <text evidence="1">Translocates 4-amino-4-deoxy-L-arabinose-phosphoundecaprenol (alpha-L-Ara4N-phosphoundecaprenol) from the cytoplasmic to the periplasmic side of the inner membrane.</text>
</comment>
<comment type="pathway">
    <text evidence="1">Bacterial outer membrane biogenesis; lipopolysaccharide biosynthesis.</text>
</comment>
<comment type="subunit">
    <text evidence="1">Heterodimer of ArnE and ArnF.</text>
</comment>
<comment type="subcellular location">
    <subcellularLocation>
        <location evidence="1">Cell inner membrane</location>
        <topology evidence="1">Multi-pass membrane protein</topology>
    </subcellularLocation>
</comment>
<comment type="similarity">
    <text evidence="1">Belongs to the ArnE family.</text>
</comment>
<keyword id="KW-0997">Cell inner membrane</keyword>
<keyword id="KW-1003">Cell membrane</keyword>
<keyword id="KW-0441">Lipid A biosynthesis</keyword>
<keyword id="KW-0444">Lipid biosynthesis</keyword>
<keyword id="KW-0443">Lipid metabolism</keyword>
<keyword id="KW-0448">Lipopolysaccharide biosynthesis</keyword>
<keyword id="KW-0472">Membrane</keyword>
<keyword id="KW-1185">Reference proteome</keyword>
<keyword id="KW-0812">Transmembrane</keyword>
<keyword id="KW-1133">Transmembrane helix</keyword>
<keyword id="KW-0813">Transport</keyword>
<protein>
    <recommendedName>
        <fullName evidence="1">Probable 4-amino-4-deoxy-L-arabinose-phosphoundecaprenol flippase subunit ArnE</fullName>
        <shortName evidence="1">L-Ara4N-phosphoundecaprenol flippase subunit ArnE</shortName>
    </recommendedName>
    <alternativeName>
        <fullName evidence="1">Undecaprenyl phosphate-aminoarabinose flippase subunit ArnE</fullName>
    </alternativeName>
</protein>
<organism>
    <name type="scientific">Proteus mirabilis (strain HI4320)</name>
    <dbReference type="NCBI Taxonomy" id="529507"/>
    <lineage>
        <taxon>Bacteria</taxon>
        <taxon>Pseudomonadati</taxon>
        <taxon>Pseudomonadota</taxon>
        <taxon>Gammaproteobacteria</taxon>
        <taxon>Enterobacterales</taxon>
        <taxon>Morganellaceae</taxon>
        <taxon>Proteus</taxon>
    </lineage>
</organism>
<feature type="chain" id="PRO_0000382980" description="Probable 4-amino-4-deoxy-L-arabinose-phosphoundecaprenol flippase subunit ArnE">
    <location>
        <begin position="1"/>
        <end position="113"/>
    </location>
</feature>
<feature type="transmembrane region" description="Helical" evidence="1">
    <location>
        <begin position="39"/>
        <end position="59"/>
    </location>
</feature>
<feature type="transmembrane region" description="Helical" evidence="1">
    <location>
        <begin position="62"/>
        <end position="82"/>
    </location>
</feature>
<feature type="transmembrane region" description="Helical" evidence="1">
    <location>
        <begin position="91"/>
        <end position="111"/>
    </location>
</feature>
<feature type="domain" description="EamA" evidence="1">
    <location>
        <begin position="42"/>
        <end position="111"/>
    </location>
</feature>
<proteinExistence type="inferred from homology"/>
<sequence length="113" mass="12755">MAFFLLLIVSLLTCIGQVCQKQAVVSWQNNSTTKARKTIFWLITAIAMLGFGMLFWLRLLQILPLSIAYPMLSINFIVVTLIGQFIYKETVNVKHWVGIASIMLGIVLMSMQS</sequence>
<reference key="1">
    <citation type="journal article" date="2008" name="J. Bacteriol.">
        <title>Complete genome sequence of uropathogenic Proteus mirabilis, a master of both adherence and motility.</title>
        <authorList>
            <person name="Pearson M.M."/>
            <person name="Sebaihia M."/>
            <person name="Churcher C."/>
            <person name="Quail M.A."/>
            <person name="Seshasayee A.S."/>
            <person name="Luscombe N.M."/>
            <person name="Abdellah Z."/>
            <person name="Arrosmith C."/>
            <person name="Atkin B."/>
            <person name="Chillingworth T."/>
            <person name="Hauser H."/>
            <person name="Jagels K."/>
            <person name="Moule S."/>
            <person name="Mungall K."/>
            <person name="Norbertczak H."/>
            <person name="Rabbinowitsch E."/>
            <person name="Walker D."/>
            <person name="Whithead S."/>
            <person name="Thomson N.R."/>
            <person name="Rather P.N."/>
            <person name="Parkhill J."/>
            <person name="Mobley H.L.T."/>
        </authorList>
    </citation>
    <scope>NUCLEOTIDE SEQUENCE [LARGE SCALE GENOMIC DNA]</scope>
    <source>
        <strain>HI4320</strain>
    </source>
</reference>
<name>ARNE_PROMH</name>
<dbReference type="EMBL" id="AM942759">
    <property type="protein sequence ID" value="CAR42275.1"/>
    <property type="molecule type" value="Genomic_DNA"/>
</dbReference>
<dbReference type="RefSeq" id="WP_004242624.1">
    <property type="nucleotide sequence ID" value="NC_010554.1"/>
</dbReference>
<dbReference type="SMR" id="B4ETM0"/>
<dbReference type="EnsemblBacteria" id="CAR42275">
    <property type="protein sequence ID" value="CAR42275"/>
    <property type="gene ID" value="PMI1048"/>
</dbReference>
<dbReference type="GeneID" id="6801412"/>
<dbReference type="KEGG" id="pmr:PMI1048"/>
<dbReference type="eggNOG" id="COG2076">
    <property type="taxonomic scope" value="Bacteria"/>
</dbReference>
<dbReference type="HOGENOM" id="CLU_131462_5_1_6"/>
<dbReference type="UniPathway" id="UPA00030"/>
<dbReference type="Proteomes" id="UP000008319">
    <property type="component" value="Chromosome"/>
</dbReference>
<dbReference type="GO" id="GO:0005886">
    <property type="term" value="C:plasma membrane"/>
    <property type="evidence" value="ECO:0007669"/>
    <property type="project" value="UniProtKB-SubCell"/>
</dbReference>
<dbReference type="GO" id="GO:1901505">
    <property type="term" value="F:carbohydrate derivative transmembrane transporter activity"/>
    <property type="evidence" value="ECO:0007669"/>
    <property type="project" value="InterPro"/>
</dbReference>
<dbReference type="GO" id="GO:0009245">
    <property type="term" value="P:lipid A biosynthetic process"/>
    <property type="evidence" value="ECO:0007669"/>
    <property type="project" value="UniProtKB-UniRule"/>
</dbReference>
<dbReference type="GO" id="GO:0009103">
    <property type="term" value="P:lipopolysaccharide biosynthetic process"/>
    <property type="evidence" value="ECO:0007669"/>
    <property type="project" value="UniProtKB-UniRule"/>
</dbReference>
<dbReference type="FunFam" id="1.10.3730.20:FF:000002">
    <property type="entry name" value="Probable 4-amino-4-deoxy-L-arabinose-phosphoundecaprenol flippase subunit ArnE"/>
    <property type="match status" value="1"/>
</dbReference>
<dbReference type="Gene3D" id="1.10.3730.20">
    <property type="match status" value="1"/>
</dbReference>
<dbReference type="HAMAP" id="MF_01869">
    <property type="entry name" value="Flippase_ArnE"/>
    <property type="match status" value="1"/>
</dbReference>
<dbReference type="InterPro" id="IPR000620">
    <property type="entry name" value="EamA_dom"/>
</dbReference>
<dbReference type="InterPro" id="IPR022883">
    <property type="entry name" value="Flippase_ArnE"/>
</dbReference>
<dbReference type="InterPro" id="IPR000390">
    <property type="entry name" value="Small_drug/metabolite_transptr"/>
</dbReference>
<dbReference type="NCBIfam" id="NF011625">
    <property type="entry name" value="PRK15051.1"/>
    <property type="match status" value="1"/>
</dbReference>
<dbReference type="PANTHER" id="PTHR30561:SF23">
    <property type="entry name" value="4-AMINO-4-DEOXY-L-ARABINOSE-PHOSPHOUNDECAPRENOL FLIPPASE SUBUNIT ARNE-RELATED"/>
    <property type="match status" value="1"/>
</dbReference>
<dbReference type="PANTHER" id="PTHR30561">
    <property type="entry name" value="SMR FAMILY PROTON-DEPENDENT DRUG EFFLUX TRANSPORTER SUGE"/>
    <property type="match status" value="1"/>
</dbReference>
<dbReference type="Pfam" id="PF00892">
    <property type="entry name" value="EamA"/>
    <property type="match status" value="1"/>
</dbReference>
<dbReference type="SUPFAM" id="SSF103481">
    <property type="entry name" value="Multidrug resistance efflux transporter EmrE"/>
    <property type="match status" value="1"/>
</dbReference>
<gene>
    <name evidence="1" type="primary">arnE</name>
    <name type="ordered locus">PMI1048</name>
</gene>